<feature type="chain" id="PRO_0000107811" description="Putative gluconeogenesis factor">
    <location>
        <begin position="1"/>
        <end position="342"/>
    </location>
</feature>
<feature type="region of interest" description="Disordered" evidence="2">
    <location>
        <begin position="318"/>
        <end position="342"/>
    </location>
</feature>
<feature type="compositionally biased region" description="Basic and acidic residues" evidence="2">
    <location>
        <begin position="333"/>
        <end position="342"/>
    </location>
</feature>
<feature type="modified residue" description="Phosphothreonine" evidence="3">
    <location>
        <position position="325"/>
    </location>
</feature>
<feature type="mutagenesis site" description="Lack of phosphorylation." evidence="3">
    <original>T</original>
    <variation>A</variation>
    <variation>S</variation>
    <location>
        <position position="325"/>
    </location>
</feature>
<keyword id="KW-0963">Cytoplasm</keyword>
<keyword id="KW-0597">Phosphoprotein</keyword>
<keyword id="KW-1185">Reference proteome</keyword>
<accession>P9WMU5</accession>
<accession>L0T6L6</accession>
<accession>P71691</accession>
<organism>
    <name type="scientific">Mycobacterium tuberculosis (strain ATCC 25618 / H37Rv)</name>
    <dbReference type="NCBI Taxonomy" id="83332"/>
    <lineage>
        <taxon>Bacteria</taxon>
        <taxon>Bacillati</taxon>
        <taxon>Actinomycetota</taxon>
        <taxon>Actinomycetes</taxon>
        <taxon>Mycobacteriales</taxon>
        <taxon>Mycobacteriaceae</taxon>
        <taxon>Mycobacterium</taxon>
        <taxon>Mycobacterium tuberculosis complex</taxon>
    </lineage>
</organism>
<reference key="1">
    <citation type="journal article" date="1998" name="Nature">
        <title>Deciphering the biology of Mycobacterium tuberculosis from the complete genome sequence.</title>
        <authorList>
            <person name="Cole S.T."/>
            <person name="Brosch R."/>
            <person name="Parkhill J."/>
            <person name="Garnier T."/>
            <person name="Churcher C.M."/>
            <person name="Harris D.E."/>
            <person name="Gordon S.V."/>
            <person name="Eiglmeier K."/>
            <person name="Gas S."/>
            <person name="Barry C.E. III"/>
            <person name="Tekaia F."/>
            <person name="Badcock K."/>
            <person name="Basham D."/>
            <person name="Brown D."/>
            <person name="Chillingworth T."/>
            <person name="Connor R."/>
            <person name="Davies R.M."/>
            <person name="Devlin K."/>
            <person name="Feltwell T."/>
            <person name="Gentles S."/>
            <person name="Hamlin N."/>
            <person name="Holroyd S."/>
            <person name="Hornsby T."/>
            <person name="Jagels K."/>
            <person name="Krogh A."/>
            <person name="McLean J."/>
            <person name="Moule S."/>
            <person name="Murphy L.D."/>
            <person name="Oliver S."/>
            <person name="Osborne J."/>
            <person name="Quail M.A."/>
            <person name="Rajandream M.A."/>
            <person name="Rogers J."/>
            <person name="Rutter S."/>
            <person name="Seeger K."/>
            <person name="Skelton S."/>
            <person name="Squares S."/>
            <person name="Squares R."/>
            <person name="Sulston J.E."/>
            <person name="Taylor K."/>
            <person name="Whitehead S."/>
            <person name="Barrell B.G."/>
        </authorList>
    </citation>
    <scope>NUCLEOTIDE SEQUENCE [LARGE SCALE GENOMIC DNA]</scope>
    <source>
        <strain>ATCC 25618 / H37Rv</strain>
    </source>
</reference>
<reference key="2">
    <citation type="journal article" date="2005" name="Genes Dev.">
        <title>The Mycobacterium tuberculosis serine/threonine kinases PknA and PknB: substrate identification and regulation of cell shape.</title>
        <authorList>
            <person name="Kang C.M."/>
            <person name="Abbott D.W."/>
            <person name="Park S.T."/>
            <person name="Dascher C.C."/>
            <person name="Cantley L.C."/>
            <person name="Husson R.N."/>
        </authorList>
    </citation>
    <scope>PHOSPHORYLATION AT THR-325</scope>
    <scope>MUTAGENESIS OF THR-325</scope>
    <source>
        <strain>ATCC 25618 / H37Rv</strain>
    </source>
</reference>
<reference key="3">
    <citation type="journal article" date="2011" name="Mol. Cell. Proteomics">
        <title>Proteogenomic analysis of Mycobacterium tuberculosis by high resolution mass spectrometry.</title>
        <authorList>
            <person name="Kelkar D.S."/>
            <person name="Kumar D."/>
            <person name="Kumar P."/>
            <person name="Balakrishnan L."/>
            <person name="Muthusamy B."/>
            <person name="Yadav A.K."/>
            <person name="Shrivastava P."/>
            <person name="Marimuthu A."/>
            <person name="Anand S."/>
            <person name="Sundaram H."/>
            <person name="Kingsbury R."/>
            <person name="Harsha H.C."/>
            <person name="Nair B."/>
            <person name="Prasad T.S."/>
            <person name="Chauhan D.S."/>
            <person name="Katoch K."/>
            <person name="Katoch V.M."/>
            <person name="Kumar P."/>
            <person name="Chaerkady R."/>
            <person name="Ramachandran S."/>
            <person name="Dash D."/>
            <person name="Pandey A."/>
        </authorList>
    </citation>
    <scope>IDENTIFICATION BY MASS SPECTROMETRY [LARGE SCALE ANALYSIS]</scope>
    <source>
        <strain>ATCC 25618 / H37Rv</strain>
    </source>
</reference>
<protein>
    <recommendedName>
        <fullName evidence="1">Putative gluconeogenesis factor</fullName>
    </recommendedName>
</protein>
<dbReference type="EMBL" id="AL123456">
    <property type="protein sequence ID" value="CCP44181.1"/>
    <property type="molecule type" value="Genomic_DNA"/>
</dbReference>
<dbReference type="PIR" id="C70903">
    <property type="entry name" value="C70903"/>
</dbReference>
<dbReference type="RefSeq" id="NP_215938.1">
    <property type="nucleotide sequence ID" value="NC_000962.3"/>
</dbReference>
<dbReference type="SMR" id="P9WMU5"/>
<dbReference type="FunCoup" id="P9WMU5">
    <property type="interactions" value="5"/>
</dbReference>
<dbReference type="STRING" id="83332.Rv1422"/>
<dbReference type="iPTMnet" id="P9WMU5"/>
<dbReference type="PaxDb" id="83332-Rv1422"/>
<dbReference type="DNASU" id="886670"/>
<dbReference type="GeneID" id="886670"/>
<dbReference type="KEGG" id="mtu:Rv1422"/>
<dbReference type="KEGG" id="mtv:RVBD_1422"/>
<dbReference type="TubercuList" id="Rv1422"/>
<dbReference type="eggNOG" id="COG0391">
    <property type="taxonomic scope" value="Bacteria"/>
</dbReference>
<dbReference type="InParanoid" id="P9WMU5"/>
<dbReference type="OrthoDB" id="9783842at2"/>
<dbReference type="PhylomeDB" id="P9WMU5"/>
<dbReference type="Proteomes" id="UP000001584">
    <property type="component" value="Chromosome"/>
</dbReference>
<dbReference type="GO" id="GO:0005737">
    <property type="term" value="C:cytoplasm"/>
    <property type="evidence" value="ECO:0007669"/>
    <property type="project" value="UniProtKB-SubCell"/>
</dbReference>
<dbReference type="GO" id="GO:0043743">
    <property type="term" value="F:LPPG:FO 2-phospho-L-lactate transferase activity"/>
    <property type="evidence" value="ECO:0007669"/>
    <property type="project" value="InterPro"/>
</dbReference>
<dbReference type="GO" id="GO:0008360">
    <property type="term" value="P:regulation of cell shape"/>
    <property type="evidence" value="ECO:0007669"/>
    <property type="project" value="UniProtKB-UniRule"/>
</dbReference>
<dbReference type="CDD" id="cd07187">
    <property type="entry name" value="YvcK_like"/>
    <property type="match status" value="1"/>
</dbReference>
<dbReference type="Gene3D" id="3.40.50.10680">
    <property type="entry name" value="CofD-like domains"/>
    <property type="match status" value="1"/>
</dbReference>
<dbReference type="HAMAP" id="MF_00973">
    <property type="entry name" value="Gluconeogen_factor"/>
    <property type="match status" value="1"/>
</dbReference>
<dbReference type="InterPro" id="IPR002882">
    <property type="entry name" value="CofD"/>
</dbReference>
<dbReference type="InterPro" id="IPR038136">
    <property type="entry name" value="CofD-like_dom_sf"/>
</dbReference>
<dbReference type="InterPro" id="IPR010119">
    <property type="entry name" value="Gluconeogen_factor"/>
</dbReference>
<dbReference type="NCBIfam" id="TIGR01826">
    <property type="entry name" value="CofD_related"/>
    <property type="match status" value="1"/>
</dbReference>
<dbReference type="PANTHER" id="PTHR30135:SF3">
    <property type="entry name" value="GLUCONEOGENESIS FACTOR-RELATED"/>
    <property type="match status" value="1"/>
</dbReference>
<dbReference type="PANTHER" id="PTHR30135">
    <property type="entry name" value="UNCHARACTERIZED PROTEIN YVCK-RELATED"/>
    <property type="match status" value="1"/>
</dbReference>
<dbReference type="Pfam" id="PF01933">
    <property type="entry name" value="CofD"/>
    <property type="match status" value="1"/>
</dbReference>
<dbReference type="SUPFAM" id="SSF142338">
    <property type="entry name" value="CofD-like"/>
    <property type="match status" value="1"/>
</dbReference>
<gene>
    <name type="ordered locus">Rv1422</name>
    <name type="ORF">MTCY21B4.40</name>
</gene>
<name>GNGF_MYCTU</name>
<evidence type="ECO:0000255" key="1">
    <source>
        <dbReference type="HAMAP-Rule" id="MF_00973"/>
    </source>
</evidence>
<evidence type="ECO:0000256" key="2">
    <source>
        <dbReference type="SAM" id="MobiDB-lite"/>
    </source>
</evidence>
<evidence type="ECO:0000269" key="3">
    <source>
    </source>
</evidence>
<proteinExistence type="evidence at protein level"/>
<sequence>MTDGIVALGGGHGLYATLSAARRLTPYVTAVVTVADDGGSSGRLRSELDVVPPGDLRMALAALASDSPHGRLWATILQHRFGGSGALAGHPIGNLMLAGLSEVLADPVAALDELGRILGVKGRVLPMCPVALQIEADVSGLEADPRMFRLIRGQVAIATTPGKVRRVRLLPTDPPATRQAVDAIMAADLVVLGPGSWFTSVIPHVLVPGLAAALRATSARRALVLNLVAEPGETAGFSVERHLHVLAQHAPGFTVHDIIIDAERVPSEREREQLRRTATMLQAEVHFADVARPGTPLHDPGKLAAVLDGVCARDVGASEPPVAATQEIPIDGGRPRGDDAWR</sequence>
<comment type="function">
    <text evidence="1">Required for morphogenesis under gluconeogenic growth conditions.</text>
</comment>
<comment type="subcellular location">
    <subcellularLocation>
        <location evidence="1">Cytoplasm</location>
    </subcellularLocation>
</comment>
<comment type="PTM">
    <text evidence="3">Phosphorylated by PknA and/or PknB.</text>
</comment>
<comment type="similarity">
    <text evidence="1">Belongs to the gluconeogenesis factor family.</text>
</comment>